<feature type="chain" id="PRO_1000066204" description="Orotate phosphoribosyltransferase">
    <location>
        <begin position="1"/>
        <end position="212"/>
    </location>
</feature>
<feature type="binding site" evidence="1">
    <location>
        <position position="94"/>
    </location>
    <ligand>
        <name>5-phospho-alpha-D-ribose 1-diphosphate</name>
        <dbReference type="ChEBI" id="CHEBI:58017"/>
        <note>ligand shared between dimeric partners</note>
    </ligand>
</feature>
<feature type="binding site" evidence="1">
    <location>
        <position position="98"/>
    </location>
    <ligand>
        <name>5-phospho-alpha-D-ribose 1-diphosphate</name>
        <dbReference type="ChEBI" id="CHEBI:58017"/>
        <note>ligand shared between dimeric partners</note>
    </ligand>
</feature>
<feature type="binding site" evidence="1">
    <location>
        <position position="100"/>
    </location>
    <ligand>
        <name>5-phospho-alpha-D-ribose 1-diphosphate</name>
        <dbReference type="ChEBI" id="CHEBI:58017"/>
        <note>ligand shared between dimeric partners</note>
    </ligand>
</feature>
<feature type="binding site" description="in other chain" evidence="1">
    <location>
        <begin position="120"/>
        <end position="128"/>
    </location>
    <ligand>
        <name>5-phospho-alpha-D-ribose 1-diphosphate</name>
        <dbReference type="ChEBI" id="CHEBI:58017"/>
        <note>ligand shared between dimeric partners</note>
    </ligand>
</feature>
<feature type="binding site" evidence="1">
    <location>
        <position position="124"/>
    </location>
    <ligand>
        <name>orotate</name>
        <dbReference type="ChEBI" id="CHEBI:30839"/>
    </ligand>
</feature>
<evidence type="ECO:0000255" key="1">
    <source>
        <dbReference type="HAMAP-Rule" id="MF_01208"/>
    </source>
</evidence>
<keyword id="KW-0328">Glycosyltransferase</keyword>
<keyword id="KW-0460">Magnesium</keyword>
<keyword id="KW-0665">Pyrimidine biosynthesis</keyword>
<keyword id="KW-0808">Transferase</keyword>
<comment type="function">
    <text evidence="1">Catalyzes the transfer of a ribosyl phosphate group from 5-phosphoribose 1-diphosphate to orotate, leading to the formation of orotidine monophosphate (OMP).</text>
</comment>
<comment type="catalytic activity">
    <reaction evidence="1">
        <text>orotidine 5'-phosphate + diphosphate = orotate + 5-phospho-alpha-D-ribose 1-diphosphate</text>
        <dbReference type="Rhea" id="RHEA:10380"/>
        <dbReference type="ChEBI" id="CHEBI:30839"/>
        <dbReference type="ChEBI" id="CHEBI:33019"/>
        <dbReference type="ChEBI" id="CHEBI:57538"/>
        <dbReference type="ChEBI" id="CHEBI:58017"/>
        <dbReference type="EC" id="2.4.2.10"/>
    </reaction>
</comment>
<comment type="cofactor">
    <cofactor evidence="1">
        <name>Mg(2+)</name>
        <dbReference type="ChEBI" id="CHEBI:18420"/>
    </cofactor>
</comment>
<comment type="pathway">
    <text evidence="1">Pyrimidine metabolism; UMP biosynthesis via de novo pathway; UMP from orotate: step 1/2.</text>
</comment>
<comment type="subunit">
    <text evidence="1">Homodimer.</text>
</comment>
<comment type="similarity">
    <text evidence="1">Belongs to the purine/pyrimidine phosphoribosyltransferase family. PyrE subfamily.</text>
</comment>
<accession>A8FD21</accession>
<reference key="1">
    <citation type="journal article" date="2007" name="PLoS ONE">
        <title>Paradoxical DNA repair and peroxide resistance gene conservation in Bacillus pumilus SAFR-032.</title>
        <authorList>
            <person name="Gioia J."/>
            <person name="Yerrapragada S."/>
            <person name="Qin X."/>
            <person name="Jiang H."/>
            <person name="Igboeli O.C."/>
            <person name="Muzny D."/>
            <person name="Dugan-Rocha S."/>
            <person name="Ding Y."/>
            <person name="Hawes A."/>
            <person name="Liu W."/>
            <person name="Perez L."/>
            <person name="Kovar C."/>
            <person name="Dinh H."/>
            <person name="Lee S."/>
            <person name="Nazareth L."/>
            <person name="Blyth P."/>
            <person name="Holder M."/>
            <person name="Buhay C."/>
            <person name="Tirumalai M.R."/>
            <person name="Liu Y."/>
            <person name="Dasgupta I."/>
            <person name="Bokhetache L."/>
            <person name="Fujita M."/>
            <person name="Karouia F."/>
            <person name="Eswara Moorthy P."/>
            <person name="Siefert J."/>
            <person name="Uzman A."/>
            <person name="Buzumbo P."/>
            <person name="Verma A."/>
            <person name="Zwiya H."/>
            <person name="McWilliams B.D."/>
            <person name="Olowu A."/>
            <person name="Clinkenbeard K.D."/>
            <person name="Newcombe D."/>
            <person name="Golebiewski L."/>
            <person name="Petrosino J.F."/>
            <person name="Nicholson W.L."/>
            <person name="Fox G.E."/>
            <person name="Venkateswaran K."/>
            <person name="Highlander S.K."/>
            <person name="Weinstock G.M."/>
        </authorList>
    </citation>
    <scope>NUCLEOTIDE SEQUENCE [LARGE SCALE GENOMIC DNA]</scope>
    <source>
        <strain>SAFR-032</strain>
    </source>
</reference>
<protein>
    <recommendedName>
        <fullName evidence="1">Orotate phosphoribosyltransferase</fullName>
        <shortName evidence="1">OPRT</shortName>
        <shortName evidence="1">OPRTase</shortName>
        <ecNumber evidence="1">2.4.2.10</ecNumber>
    </recommendedName>
</protein>
<sequence>MKTKIAKHLLQIKAVSLKPDEPFTWASGIKSPIYCDNRLTLSYPEVRHDIAEGLKELILTHFEGAEVIAGTATAGIPHAALAADRLNAPMCYVRSKPKAHGKGNQIEGAVSKGQKVVVVEDLISTGGSVLEVVAALQEAGCDVLGVAAIFTYGLPKATAAFQEKNIPYVTLTDYDTLTDVALELKAIEPSAMNKLKRWRQDPSSESWMEETV</sequence>
<gene>
    <name evidence="1" type="primary">pyrE</name>
    <name type="ordered locus">BPUM_1455</name>
</gene>
<dbReference type="EC" id="2.4.2.10" evidence="1"/>
<dbReference type="EMBL" id="CP000813">
    <property type="protein sequence ID" value="ABV62138.1"/>
    <property type="molecule type" value="Genomic_DNA"/>
</dbReference>
<dbReference type="RefSeq" id="WP_012009901.1">
    <property type="nucleotide sequence ID" value="NC_009848.4"/>
</dbReference>
<dbReference type="SMR" id="A8FD21"/>
<dbReference type="STRING" id="315750.BPUM_1455"/>
<dbReference type="GeneID" id="5620718"/>
<dbReference type="KEGG" id="bpu:BPUM_1455"/>
<dbReference type="eggNOG" id="COG0461">
    <property type="taxonomic scope" value="Bacteria"/>
</dbReference>
<dbReference type="HOGENOM" id="CLU_074878_1_1_9"/>
<dbReference type="OrthoDB" id="9802134at2"/>
<dbReference type="UniPathway" id="UPA00070">
    <property type="reaction ID" value="UER00119"/>
</dbReference>
<dbReference type="Proteomes" id="UP000001355">
    <property type="component" value="Chromosome"/>
</dbReference>
<dbReference type="GO" id="GO:0000287">
    <property type="term" value="F:magnesium ion binding"/>
    <property type="evidence" value="ECO:0007669"/>
    <property type="project" value="UniProtKB-UniRule"/>
</dbReference>
<dbReference type="GO" id="GO:0004588">
    <property type="term" value="F:orotate phosphoribosyltransferase activity"/>
    <property type="evidence" value="ECO:0007669"/>
    <property type="project" value="UniProtKB-UniRule"/>
</dbReference>
<dbReference type="GO" id="GO:0044205">
    <property type="term" value="P:'de novo' UMP biosynthetic process"/>
    <property type="evidence" value="ECO:0007669"/>
    <property type="project" value="UniProtKB-UniRule"/>
</dbReference>
<dbReference type="GO" id="GO:0019856">
    <property type="term" value="P:pyrimidine nucleobase biosynthetic process"/>
    <property type="evidence" value="ECO:0007669"/>
    <property type="project" value="TreeGrafter"/>
</dbReference>
<dbReference type="CDD" id="cd06223">
    <property type="entry name" value="PRTases_typeI"/>
    <property type="match status" value="1"/>
</dbReference>
<dbReference type="Gene3D" id="3.40.50.2020">
    <property type="match status" value="1"/>
</dbReference>
<dbReference type="HAMAP" id="MF_01208">
    <property type="entry name" value="PyrE"/>
    <property type="match status" value="1"/>
</dbReference>
<dbReference type="InterPro" id="IPR023031">
    <property type="entry name" value="OPRT"/>
</dbReference>
<dbReference type="InterPro" id="IPR004467">
    <property type="entry name" value="Or_phspho_trans_dom"/>
</dbReference>
<dbReference type="InterPro" id="IPR000836">
    <property type="entry name" value="PRibTrfase_dom"/>
</dbReference>
<dbReference type="InterPro" id="IPR029057">
    <property type="entry name" value="PRTase-like"/>
</dbReference>
<dbReference type="NCBIfam" id="TIGR00336">
    <property type="entry name" value="pyrE"/>
    <property type="match status" value="1"/>
</dbReference>
<dbReference type="PANTHER" id="PTHR19278">
    <property type="entry name" value="OROTATE PHOSPHORIBOSYLTRANSFERASE"/>
    <property type="match status" value="1"/>
</dbReference>
<dbReference type="PANTHER" id="PTHR19278:SF9">
    <property type="entry name" value="URIDINE 5'-MONOPHOSPHATE SYNTHASE"/>
    <property type="match status" value="1"/>
</dbReference>
<dbReference type="Pfam" id="PF00156">
    <property type="entry name" value="Pribosyltran"/>
    <property type="match status" value="1"/>
</dbReference>
<dbReference type="SUPFAM" id="SSF53271">
    <property type="entry name" value="PRTase-like"/>
    <property type="match status" value="1"/>
</dbReference>
<dbReference type="PROSITE" id="PS00103">
    <property type="entry name" value="PUR_PYR_PR_TRANSFER"/>
    <property type="match status" value="1"/>
</dbReference>
<proteinExistence type="inferred from homology"/>
<organism>
    <name type="scientific">Bacillus pumilus (strain SAFR-032)</name>
    <dbReference type="NCBI Taxonomy" id="315750"/>
    <lineage>
        <taxon>Bacteria</taxon>
        <taxon>Bacillati</taxon>
        <taxon>Bacillota</taxon>
        <taxon>Bacilli</taxon>
        <taxon>Bacillales</taxon>
        <taxon>Bacillaceae</taxon>
        <taxon>Bacillus</taxon>
    </lineage>
</organism>
<name>PYRE_BACP2</name>